<reference key="1">
    <citation type="submission" date="2006-03" db="EMBL/GenBank/DDBJ databases">
        <title>Complete genome sequence of Francisella tularensis LVS (Live Vaccine Strain).</title>
        <authorList>
            <person name="Chain P."/>
            <person name="Larimer F."/>
            <person name="Land M."/>
            <person name="Stilwagen S."/>
            <person name="Larsson P."/>
            <person name="Bearden S."/>
            <person name="Chu M."/>
            <person name="Oyston P."/>
            <person name="Forsman M."/>
            <person name="Andersson S."/>
            <person name="Lindler L."/>
            <person name="Titball R."/>
            <person name="Garcia E."/>
        </authorList>
    </citation>
    <scope>NUCLEOTIDE SEQUENCE [LARGE SCALE GENOMIC DNA]</scope>
    <source>
        <strain>LVS</strain>
    </source>
</reference>
<feature type="chain" id="PRO_0000338685" description="3-demethoxyubiquinol 3-hydroxylase">
    <location>
        <begin position="1"/>
        <end position="211"/>
    </location>
</feature>
<feature type="binding site" evidence="1">
    <location>
        <position position="60"/>
    </location>
    <ligand>
        <name>Fe cation</name>
        <dbReference type="ChEBI" id="CHEBI:24875"/>
        <label>1</label>
    </ligand>
</feature>
<feature type="binding site" evidence="1">
    <location>
        <position position="90"/>
    </location>
    <ligand>
        <name>Fe cation</name>
        <dbReference type="ChEBI" id="CHEBI:24875"/>
        <label>1</label>
    </ligand>
</feature>
<feature type="binding site" evidence="1">
    <location>
        <position position="90"/>
    </location>
    <ligand>
        <name>Fe cation</name>
        <dbReference type="ChEBI" id="CHEBI:24875"/>
        <label>2</label>
    </ligand>
</feature>
<feature type="binding site" evidence="1">
    <location>
        <position position="93"/>
    </location>
    <ligand>
        <name>Fe cation</name>
        <dbReference type="ChEBI" id="CHEBI:24875"/>
        <label>1</label>
    </ligand>
</feature>
<feature type="binding site" evidence="1">
    <location>
        <position position="142"/>
    </location>
    <ligand>
        <name>Fe cation</name>
        <dbReference type="ChEBI" id="CHEBI:24875"/>
        <label>2</label>
    </ligand>
</feature>
<feature type="binding site" evidence="1">
    <location>
        <position position="174"/>
    </location>
    <ligand>
        <name>Fe cation</name>
        <dbReference type="ChEBI" id="CHEBI:24875"/>
        <label>1</label>
    </ligand>
</feature>
<feature type="binding site" evidence="1">
    <location>
        <position position="174"/>
    </location>
    <ligand>
        <name>Fe cation</name>
        <dbReference type="ChEBI" id="CHEBI:24875"/>
        <label>2</label>
    </ligand>
</feature>
<feature type="binding site" evidence="1">
    <location>
        <position position="177"/>
    </location>
    <ligand>
        <name>Fe cation</name>
        <dbReference type="ChEBI" id="CHEBI:24875"/>
        <label>2</label>
    </ligand>
</feature>
<accession>Q2A3K5</accession>
<sequence length="211" mass="23816">MRKLSFLDRVIEELDSYARFTKVPLNPSKKSPSSDTIDGKLFEIEKKHSAGLMRVDYTGEICAQGLYRGQASVAKSPQTKEHLYHAAAEEYDHLAWCGERLQELGARPSLLNPFWYWTSFGIGAVAGSISDSLSYGFVVETEKQVMKHIDSHLKSLPVNDNRSREILKQMYIDESEHAVEAEKAGGKKLPKTVKAIMKLQSKVMTTLAYRF</sequence>
<dbReference type="EC" id="1.14.99.60" evidence="1"/>
<dbReference type="EMBL" id="AM233362">
    <property type="protein sequence ID" value="CAJ79428.1"/>
    <property type="molecule type" value="Genomic_DNA"/>
</dbReference>
<dbReference type="RefSeq" id="WP_003015834.1">
    <property type="nucleotide sequence ID" value="NZ_CP009694.1"/>
</dbReference>
<dbReference type="SMR" id="Q2A3K5"/>
<dbReference type="KEGG" id="ftl:FTL_0989"/>
<dbReference type="UniPathway" id="UPA00232"/>
<dbReference type="Proteomes" id="UP000001944">
    <property type="component" value="Chromosome"/>
</dbReference>
<dbReference type="GO" id="GO:0005886">
    <property type="term" value="C:plasma membrane"/>
    <property type="evidence" value="ECO:0007669"/>
    <property type="project" value="UniProtKB-SubCell"/>
</dbReference>
<dbReference type="GO" id="GO:0008682">
    <property type="term" value="F:3-demethoxyubiquinol 3-hydroxylase activity"/>
    <property type="evidence" value="ECO:0007669"/>
    <property type="project" value="UniProtKB-EC"/>
</dbReference>
<dbReference type="GO" id="GO:0046872">
    <property type="term" value="F:metal ion binding"/>
    <property type="evidence" value="ECO:0007669"/>
    <property type="project" value="UniProtKB-KW"/>
</dbReference>
<dbReference type="GO" id="GO:0006744">
    <property type="term" value="P:ubiquinone biosynthetic process"/>
    <property type="evidence" value="ECO:0007669"/>
    <property type="project" value="UniProtKB-UniRule"/>
</dbReference>
<dbReference type="CDD" id="cd01042">
    <property type="entry name" value="DMQH"/>
    <property type="match status" value="1"/>
</dbReference>
<dbReference type="Gene3D" id="1.20.1260.10">
    <property type="match status" value="1"/>
</dbReference>
<dbReference type="HAMAP" id="MF_01658">
    <property type="entry name" value="COQ7"/>
    <property type="match status" value="1"/>
</dbReference>
<dbReference type="InterPro" id="IPR047809">
    <property type="entry name" value="COQ7_proteobact"/>
</dbReference>
<dbReference type="InterPro" id="IPR012347">
    <property type="entry name" value="Ferritin-like"/>
</dbReference>
<dbReference type="InterPro" id="IPR009078">
    <property type="entry name" value="Ferritin-like_SF"/>
</dbReference>
<dbReference type="InterPro" id="IPR011566">
    <property type="entry name" value="Ubq_synth_Coq7"/>
</dbReference>
<dbReference type="NCBIfam" id="NF033656">
    <property type="entry name" value="DMQ_monoox_COQ7"/>
    <property type="match status" value="1"/>
</dbReference>
<dbReference type="PANTHER" id="PTHR11237:SF4">
    <property type="entry name" value="5-DEMETHOXYUBIQUINONE HYDROXYLASE, MITOCHONDRIAL"/>
    <property type="match status" value="1"/>
</dbReference>
<dbReference type="PANTHER" id="PTHR11237">
    <property type="entry name" value="COENZYME Q10 BIOSYNTHESIS PROTEIN 7"/>
    <property type="match status" value="1"/>
</dbReference>
<dbReference type="Pfam" id="PF03232">
    <property type="entry name" value="COQ7"/>
    <property type="match status" value="1"/>
</dbReference>
<dbReference type="SUPFAM" id="SSF47240">
    <property type="entry name" value="Ferritin-like"/>
    <property type="match status" value="1"/>
</dbReference>
<keyword id="KW-1003">Cell membrane</keyword>
<keyword id="KW-0408">Iron</keyword>
<keyword id="KW-0472">Membrane</keyword>
<keyword id="KW-0479">Metal-binding</keyword>
<keyword id="KW-0503">Monooxygenase</keyword>
<keyword id="KW-0560">Oxidoreductase</keyword>
<keyword id="KW-1185">Reference proteome</keyword>
<keyword id="KW-0831">Ubiquinone biosynthesis</keyword>
<proteinExistence type="inferred from homology"/>
<organism>
    <name type="scientific">Francisella tularensis subsp. holarctica (strain LVS)</name>
    <dbReference type="NCBI Taxonomy" id="376619"/>
    <lineage>
        <taxon>Bacteria</taxon>
        <taxon>Pseudomonadati</taxon>
        <taxon>Pseudomonadota</taxon>
        <taxon>Gammaproteobacteria</taxon>
        <taxon>Thiotrichales</taxon>
        <taxon>Francisellaceae</taxon>
        <taxon>Francisella</taxon>
    </lineage>
</organism>
<evidence type="ECO:0000255" key="1">
    <source>
        <dbReference type="HAMAP-Rule" id="MF_01658"/>
    </source>
</evidence>
<protein>
    <recommendedName>
        <fullName evidence="1">3-demethoxyubiquinol 3-hydroxylase</fullName>
        <shortName evidence="1">DMQ hydroxylase</shortName>
        <ecNumber evidence="1">1.14.99.60</ecNumber>
    </recommendedName>
    <alternativeName>
        <fullName evidence="1">2-nonaprenyl-3-methyl-6-methoxy-1,4-benzoquinol hydroxylase</fullName>
    </alternativeName>
</protein>
<name>COQ7_FRATH</name>
<gene>
    <name evidence="1" type="primary">coq7</name>
    <name type="ordered locus">FTL_0989</name>
</gene>
<comment type="function">
    <text evidence="1">Catalyzes the hydroxylation of 2-nonaprenyl-3-methyl-6-methoxy-1,4-benzoquinol during ubiquinone biosynthesis.</text>
</comment>
<comment type="catalytic activity">
    <reaction evidence="1">
        <text>a 5-methoxy-2-methyl-3-(all-trans-polyprenyl)benzene-1,4-diol + AH2 + O2 = a 3-demethylubiquinol + A + H2O</text>
        <dbReference type="Rhea" id="RHEA:50908"/>
        <dbReference type="Rhea" id="RHEA-COMP:10859"/>
        <dbReference type="Rhea" id="RHEA-COMP:10914"/>
        <dbReference type="ChEBI" id="CHEBI:13193"/>
        <dbReference type="ChEBI" id="CHEBI:15377"/>
        <dbReference type="ChEBI" id="CHEBI:15379"/>
        <dbReference type="ChEBI" id="CHEBI:17499"/>
        <dbReference type="ChEBI" id="CHEBI:84167"/>
        <dbReference type="ChEBI" id="CHEBI:84422"/>
        <dbReference type="EC" id="1.14.99.60"/>
    </reaction>
</comment>
<comment type="cofactor">
    <cofactor evidence="1">
        <name>Fe cation</name>
        <dbReference type="ChEBI" id="CHEBI:24875"/>
    </cofactor>
    <text evidence="1">Binds 2 iron ions per subunit.</text>
</comment>
<comment type="pathway">
    <text evidence="1">Cofactor biosynthesis; ubiquinone biosynthesis.</text>
</comment>
<comment type="subcellular location">
    <subcellularLocation>
        <location evidence="1">Cell membrane</location>
        <topology evidence="1">Peripheral membrane protein</topology>
    </subcellularLocation>
</comment>
<comment type="similarity">
    <text evidence="1">Belongs to the COQ7 family.</text>
</comment>